<keyword id="KW-0133">Cell shape</keyword>
<keyword id="KW-0961">Cell wall biogenesis/degradation</keyword>
<keyword id="KW-0413">Isomerase</keyword>
<keyword id="KW-0573">Peptidoglycan synthesis</keyword>
<proteinExistence type="inferred from homology"/>
<protein>
    <recommendedName>
        <fullName evidence="1">Glutamate racemase</fullName>
        <ecNumber evidence="1">5.1.1.3</ecNumber>
    </recommendedName>
</protein>
<name>MURI_ALIFM</name>
<accession>B5FCA3</accession>
<dbReference type="EC" id="5.1.1.3" evidence="1"/>
<dbReference type="EMBL" id="CP001139">
    <property type="protein sequence ID" value="ACH67390.1"/>
    <property type="molecule type" value="Genomic_DNA"/>
</dbReference>
<dbReference type="RefSeq" id="WP_012534394.1">
    <property type="nucleotide sequence ID" value="NC_011184.1"/>
</dbReference>
<dbReference type="SMR" id="B5FCA3"/>
<dbReference type="KEGG" id="vfm:VFMJ11_2557"/>
<dbReference type="HOGENOM" id="CLU_052344_2_0_6"/>
<dbReference type="UniPathway" id="UPA00219"/>
<dbReference type="Proteomes" id="UP000001857">
    <property type="component" value="Chromosome I"/>
</dbReference>
<dbReference type="GO" id="GO:0008881">
    <property type="term" value="F:glutamate racemase activity"/>
    <property type="evidence" value="ECO:0007669"/>
    <property type="project" value="UniProtKB-UniRule"/>
</dbReference>
<dbReference type="GO" id="GO:0071555">
    <property type="term" value="P:cell wall organization"/>
    <property type="evidence" value="ECO:0007669"/>
    <property type="project" value="UniProtKB-KW"/>
</dbReference>
<dbReference type="GO" id="GO:0009252">
    <property type="term" value="P:peptidoglycan biosynthetic process"/>
    <property type="evidence" value="ECO:0007669"/>
    <property type="project" value="UniProtKB-UniRule"/>
</dbReference>
<dbReference type="GO" id="GO:0008360">
    <property type="term" value="P:regulation of cell shape"/>
    <property type="evidence" value="ECO:0007669"/>
    <property type="project" value="UniProtKB-KW"/>
</dbReference>
<dbReference type="FunFam" id="3.40.50.1860:FF:000001">
    <property type="entry name" value="Glutamate racemase"/>
    <property type="match status" value="1"/>
</dbReference>
<dbReference type="Gene3D" id="3.40.50.1860">
    <property type="match status" value="2"/>
</dbReference>
<dbReference type="HAMAP" id="MF_00258">
    <property type="entry name" value="Glu_racemase"/>
    <property type="match status" value="1"/>
</dbReference>
<dbReference type="InterPro" id="IPR015942">
    <property type="entry name" value="Asp/Glu/hydantoin_racemase"/>
</dbReference>
<dbReference type="InterPro" id="IPR001920">
    <property type="entry name" value="Asp/Glu_race"/>
</dbReference>
<dbReference type="InterPro" id="IPR018187">
    <property type="entry name" value="Asp/Glu_racemase_AS_1"/>
</dbReference>
<dbReference type="InterPro" id="IPR033134">
    <property type="entry name" value="Asp/Glu_racemase_AS_2"/>
</dbReference>
<dbReference type="InterPro" id="IPR004391">
    <property type="entry name" value="Glu_race"/>
</dbReference>
<dbReference type="NCBIfam" id="TIGR00067">
    <property type="entry name" value="glut_race"/>
    <property type="match status" value="1"/>
</dbReference>
<dbReference type="PANTHER" id="PTHR21198">
    <property type="entry name" value="GLUTAMATE RACEMASE"/>
    <property type="match status" value="1"/>
</dbReference>
<dbReference type="PANTHER" id="PTHR21198:SF2">
    <property type="entry name" value="GLUTAMATE RACEMASE"/>
    <property type="match status" value="1"/>
</dbReference>
<dbReference type="Pfam" id="PF01177">
    <property type="entry name" value="Asp_Glu_race"/>
    <property type="match status" value="1"/>
</dbReference>
<dbReference type="SUPFAM" id="SSF53681">
    <property type="entry name" value="Aspartate/glutamate racemase"/>
    <property type="match status" value="2"/>
</dbReference>
<dbReference type="PROSITE" id="PS00923">
    <property type="entry name" value="ASP_GLU_RACEMASE_1"/>
    <property type="match status" value="1"/>
</dbReference>
<dbReference type="PROSITE" id="PS00924">
    <property type="entry name" value="ASP_GLU_RACEMASE_2"/>
    <property type="match status" value="1"/>
</dbReference>
<evidence type="ECO:0000255" key="1">
    <source>
        <dbReference type="HAMAP-Rule" id="MF_00258"/>
    </source>
</evidence>
<comment type="function">
    <text evidence="1">Provides the (R)-glutamate required for cell wall biosynthesis.</text>
</comment>
<comment type="catalytic activity">
    <reaction evidence="1">
        <text>L-glutamate = D-glutamate</text>
        <dbReference type="Rhea" id="RHEA:12813"/>
        <dbReference type="ChEBI" id="CHEBI:29985"/>
        <dbReference type="ChEBI" id="CHEBI:29986"/>
        <dbReference type="EC" id="5.1.1.3"/>
    </reaction>
</comment>
<comment type="pathway">
    <text evidence="1">Cell wall biogenesis; peptidoglycan biosynthesis.</text>
</comment>
<comment type="similarity">
    <text evidence="1">Belongs to the aspartate/glutamate racemases family.</text>
</comment>
<reference key="1">
    <citation type="submission" date="2008-08" db="EMBL/GenBank/DDBJ databases">
        <title>Complete sequence of Vibrio fischeri strain MJ11.</title>
        <authorList>
            <person name="Mandel M.J."/>
            <person name="Stabb E.V."/>
            <person name="Ruby E.G."/>
            <person name="Ferriera S."/>
            <person name="Johnson J."/>
            <person name="Kravitz S."/>
            <person name="Beeson K."/>
            <person name="Sutton G."/>
            <person name="Rogers Y.-H."/>
            <person name="Friedman R."/>
            <person name="Frazier M."/>
            <person name="Venter J.C."/>
        </authorList>
    </citation>
    <scope>NUCLEOTIDE SEQUENCE [LARGE SCALE GENOMIC DNA]</scope>
    <source>
        <strain>MJ11</strain>
    </source>
</reference>
<sequence length="261" mass="28733">MPKHILIFDSGIGGLSVYKEIKYQLPLAKYIYAFDNAAFPYGELTESVLIERTTHIISELCSQFPIDIVVIACNTASTVVLPSLRDKLDIPVVGVVPAIKPAALVSNKIGLLATPATVKRSYTYDLIKSFAPISDVQLLGSTRLVEMAEEKMIGIDVDMRAKRDLSPWQNKVDTIVLGCTHFPFLKNEIKKALGNKILLIDSGEAIARRVKQLLNGDGVESAVLFEGEVFCSAPSIKEEALNHTFKELNFSSLQCLGYPKF</sequence>
<organism>
    <name type="scientific">Aliivibrio fischeri (strain MJ11)</name>
    <name type="common">Vibrio fischeri</name>
    <dbReference type="NCBI Taxonomy" id="388396"/>
    <lineage>
        <taxon>Bacteria</taxon>
        <taxon>Pseudomonadati</taxon>
        <taxon>Pseudomonadota</taxon>
        <taxon>Gammaproteobacteria</taxon>
        <taxon>Vibrionales</taxon>
        <taxon>Vibrionaceae</taxon>
        <taxon>Aliivibrio</taxon>
    </lineage>
</organism>
<feature type="chain" id="PRO_1000114074" description="Glutamate racemase">
    <location>
        <begin position="1"/>
        <end position="261"/>
    </location>
</feature>
<feature type="active site" description="Proton donor/acceptor" evidence="1">
    <location>
        <position position="73"/>
    </location>
</feature>
<feature type="active site" description="Proton donor/acceptor" evidence="1">
    <location>
        <position position="179"/>
    </location>
</feature>
<feature type="binding site" evidence="1">
    <location>
        <begin position="9"/>
        <end position="10"/>
    </location>
    <ligand>
        <name>substrate</name>
    </ligand>
</feature>
<feature type="binding site" evidence="1">
    <location>
        <begin position="41"/>
        <end position="42"/>
    </location>
    <ligand>
        <name>substrate</name>
    </ligand>
</feature>
<feature type="binding site" evidence="1">
    <location>
        <begin position="74"/>
        <end position="75"/>
    </location>
    <ligand>
        <name>substrate</name>
    </ligand>
</feature>
<feature type="binding site" evidence="1">
    <location>
        <begin position="180"/>
        <end position="181"/>
    </location>
    <ligand>
        <name>substrate</name>
    </ligand>
</feature>
<gene>
    <name evidence="1" type="primary">murI</name>
    <name type="ordered locus">VFMJ11_2557</name>
</gene>